<organism>
    <name type="scientific">Bacillus mycoides (strain KBAB4)</name>
    <name type="common">Bacillus weihenstephanensis</name>
    <dbReference type="NCBI Taxonomy" id="315730"/>
    <lineage>
        <taxon>Bacteria</taxon>
        <taxon>Bacillati</taxon>
        <taxon>Bacillota</taxon>
        <taxon>Bacilli</taxon>
        <taxon>Bacillales</taxon>
        <taxon>Bacillaceae</taxon>
        <taxon>Bacillus</taxon>
        <taxon>Bacillus cereus group</taxon>
    </lineage>
</organism>
<proteinExistence type="inferred from homology"/>
<reference key="1">
    <citation type="journal article" date="2008" name="Chem. Biol. Interact.">
        <title>Extending the Bacillus cereus group genomics to putative food-borne pathogens of different toxicity.</title>
        <authorList>
            <person name="Lapidus A."/>
            <person name="Goltsman E."/>
            <person name="Auger S."/>
            <person name="Galleron N."/>
            <person name="Segurens B."/>
            <person name="Dossat C."/>
            <person name="Land M.L."/>
            <person name="Broussolle V."/>
            <person name="Brillard J."/>
            <person name="Guinebretiere M.-H."/>
            <person name="Sanchis V."/>
            <person name="Nguen-the C."/>
            <person name="Lereclus D."/>
            <person name="Richardson P."/>
            <person name="Wincker P."/>
            <person name="Weissenbach J."/>
            <person name="Ehrlich S.D."/>
            <person name="Sorokin A."/>
        </authorList>
    </citation>
    <scope>NUCLEOTIDE SEQUENCE [LARGE SCALE GENOMIC DNA]</scope>
    <source>
        <strain>KBAB4</strain>
    </source>
</reference>
<evidence type="ECO:0000255" key="1">
    <source>
        <dbReference type="HAMAP-Rule" id="MF_01345"/>
    </source>
</evidence>
<evidence type="ECO:0000305" key="2"/>
<sequence length="87" mass="10175">MSERNQRKVYTGRVVSDKMDKTITVLVETYKTHSLYGKRVKYSKKYKAHDEQNQAKLGDIVKIMETRPLSATKRFRLVEIVEEAVVI</sequence>
<name>RS17_BACMK</name>
<dbReference type="EMBL" id="CP000903">
    <property type="protein sequence ID" value="ABY41383.1"/>
    <property type="molecule type" value="Genomic_DNA"/>
</dbReference>
<dbReference type="RefSeq" id="WP_002091526.1">
    <property type="nucleotide sequence ID" value="NZ_CAKMRX030000129.1"/>
</dbReference>
<dbReference type="SMR" id="A9VP86"/>
<dbReference type="GeneID" id="66264812"/>
<dbReference type="KEGG" id="bwe:BcerKBAB4_0114"/>
<dbReference type="eggNOG" id="COG0186">
    <property type="taxonomic scope" value="Bacteria"/>
</dbReference>
<dbReference type="HOGENOM" id="CLU_073626_1_0_9"/>
<dbReference type="Proteomes" id="UP000002154">
    <property type="component" value="Chromosome"/>
</dbReference>
<dbReference type="GO" id="GO:0022627">
    <property type="term" value="C:cytosolic small ribosomal subunit"/>
    <property type="evidence" value="ECO:0007669"/>
    <property type="project" value="TreeGrafter"/>
</dbReference>
<dbReference type="GO" id="GO:0019843">
    <property type="term" value="F:rRNA binding"/>
    <property type="evidence" value="ECO:0007669"/>
    <property type="project" value="UniProtKB-UniRule"/>
</dbReference>
<dbReference type="GO" id="GO:0003735">
    <property type="term" value="F:structural constituent of ribosome"/>
    <property type="evidence" value="ECO:0007669"/>
    <property type="project" value="InterPro"/>
</dbReference>
<dbReference type="GO" id="GO:0006412">
    <property type="term" value="P:translation"/>
    <property type="evidence" value="ECO:0007669"/>
    <property type="project" value="UniProtKB-UniRule"/>
</dbReference>
<dbReference type="CDD" id="cd00364">
    <property type="entry name" value="Ribosomal_uS17"/>
    <property type="match status" value="1"/>
</dbReference>
<dbReference type="FunFam" id="2.40.50.140:FF:000026">
    <property type="entry name" value="30S ribosomal protein S17"/>
    <property type="match status" value="1"/>
</dbReference>
<dbReference type="Gene3D" id="2.40.50.140">
    <property type="entry name" value="Nucleic acid-binding proteins"/>
    <property type="match status" value="1"/>
</dbReference>
<dbReference type="HAMAP" id="MF_01345_B">
    <property type="entry name" value="Ribosomal_uS17_B"/>
    <property type="match status" value="1"/>
</dbReference>
<dbReference type="InterPro" id="IPR012340">
    <property type="entry name" value="NA-bd_OB-fold"/>
</dbReference>
<dbReference type="InterPro" id="IPR000266">
    <property type="entry name" value="Ribosomal_uS17"/>
</dbReference>
<dbReference type="InterPro" id="IPR019984">
    <property type="entry name" value="Ribosomal_uS17_bact/chlr"/>
</dbReference>
<dbReference type="InterPro" id="IPR019979">
    <property type="entry name" value="Ribosomal_uS17_CS"/>
</dbReference>
<dbReference type="NCBIfam" id="NF004123">
    <property type="entry name" value="PRK05610.1"/>
    <property type="match status" value="1"/>
</dbReference>
<dbReference type="NCBIfam" id="TIGR03635">
    <property type="entry name" value="uS17_bact"/>
    <property type="match status" value="1"/>
</dbReference>
<dbReference type="PANTHER" id="PTHR10744">
    <property type="entry name" value="40S RIBOSOMAL PROTEIN S11 FAMILY MEMBER"/>
    <property type="match status" value="1"/>
</dbReference>
<dbReference type="PANTHER" id="PTHR10744:SF1">
    <property type="entry name" value="SMALL RIBOSOMAL SUBUNIT PROTEIN US17M"/>
    <property type="match status" value="1"/>
</dbReference>
<dbReference type="Pfam" id="PF00366">
    <property type="entry name" value="Ribosomal_S17"/>
    <property type="match status" value="1"/>
</dbReference>
<dbReference type="PRINTS" id="PR00973">
    <property type="entry name" value="RIBOSOMALS17"/>
</dbReference>
<dbReference type="SUPFAM" id="SSF50249">
    <property type="entry name" value="Nucleic acid-binding proteins"/>
    <property type="match status" value="1"/>
</dbReference>
<dbReference type="PROSITE" id="PS00056">
    <property type="entry name" value="RIBOSOMAL_S17"/>
    <property type="match status" value="1"/>
</dbReference>
<feature type="chain" id="PRO_1000143221" description="Small ribosomal subunit protein uS17">
    <location>
        <begin position="1"/>
        <end position="87"/>
    </location>
</feature>
<accession>A9VP86</accession>
<keyword id="KW-0687">Ribonucleoprotein</keyword>
<keyword id="KW-0689">Ribosomal protein</keyword>
<keyword id="KW-0694">RNA-binding</keyword>
<keyword id="KW-0699">rRNA-binding</keyword>
<protein>
    <recommendedName>
        <fullName evidence="1">Small ribosomal subunit protein uS17</fullName>
    </recommendedName>
    <alternativeName>
        <fullName evidence="2">30S ribosomal protein S17</fullName>
    </alternativeName>
</protein>
<comment type="function">
    <text evidence="1">One of the primary rRNA binding proteins, it binds specifically to the 5'-end of 16S ribosomal RNA.</text>
</comment>
<comment type="subunit">
    <text evidence="1">Part of the 30S ribosomal subunit.</text>
</comment>
<comment type="similarity">
    <text evidence="1">Belongs to the universal ribosomal protein uS17 family.</text>
</comment>
<gene>
    <name evidence="1" type="primary">rpsQ</name>
    <name type="ordered locus">BcerKBAB4_0114</name>
</gene>